<name>BEL1_ARATH</name>
<comment type="function">
    <text evidence="5 6 9">Plays a major role in ovule patterning and in determination of integument identity via its interaction with MADS-box factors. Formation of complex with AG-SEP dimers negatively regulates the carpel identity process and favors the maintenance of ovule identity. BEL1-STM complex maintains the indeterminacy of the inflorescence meristem. Required, with SPL, for cytokinin-induced PIN1 expression in ovules (PubMed:22786869).</text>
</comment>
<comment type="subunit">
    <text evidence="6 7 8 10">May form heterodimeric complexes with TALE/KNOX proteins STM, KNAT1/BP, KNAT2 and KNAT5 (PubMed:17873098). Interacts with AG-SEP1 and AG-SEP3 dimers (PubMed:17693535). Interacts with KNATM, isoform KNATM-B (PubMed:18398054). Interacts with BZIP30 (PubMed:27402171).</text>
</comment>
<comment type="interaction">
    <interactant intactId="EBI-1153783">
        <id>Q38897</id>
    </interactant>
    <interactant intactId="EBI-15192431">
        <id>A0A178VFA3</id>
        <label>AXX17_At3g20260</label>
    </interactant>
    <organismsDiffer>false</organismsDiffer>
    <experiments>3</experiments>
</comment>
<comment type="interaction">
    <interactant intactId="EBI-1153783">
        <id>Q38897</id>
    </interactant>
    <interactant intactId="EBI-1803261">
        <id>Q8S307</id>
        <label>BZR1</label>
    </interactant>
    <organismsDiffer>false</organismsDiffer>
    <experiments>3</experiments>
</comment>
<comment type="interaction">
    <interactant intactId="EBI-1153783">
        <id>Q38897</id>
    </interactant>
    <interactant intactId="EBI-4446727">
        <id>Q94ID6</id>
        <label>ERF12</label>
    </interactant>
    <organismsDiffer>false</organismsDiffer>
    <experiments>3</experiments>
</comment>
<comment type="interaction">
    <interactant intactId="EBI-1153783">
        <id>Q38897</id>
    </interactant>
    <interactant intactId="EBI-2000137">
        <id>Q9MAI5</id>
        <label>ERF8</label>
    </interactant>
    <organismsDiffer>false</organismsDiffer>
    <experiments>3</experiments>
</comment>
<comment type="interaction">
    <interactant intactId="EBI-1153783">
        <id>Q38897</id>
    </interactant>
    <interactant intactId="EBI-963606">
        <id>Q9LQT8</id>
        <label>GAI</label>
    </interactant>
    <organismsDiffer>false</organismsDiffer>
    <experiments>3</experiments>
</comment>
<comment type="interaction">
    <interactant intactId="EBI-1153783">
        <id>Q38897</id>
    </interactant>
    <interactant intactId="EBI-3946459">
        <id>Q9C5X0</id>
        <label>IAA34</label>
    </interactant>
    <organismsDiffer>false</organismsDiffer>
    <experiments>3</experiments>
</comment>
<comment type="interaction">
    <interactant intactId="EBI-1153783">
        <id>Q38897</id>
    </interactant>
    <interactant intactId="EBI-530486">
        <id>P46639</id>
        <label>KNAT1</label>
    </interactant>
    <organismsDiffer>false</organismsDiffer>
    <experiments>9</experiments>
</comment>
<comment type="interaction">
    <interactant intactId="EBI-1153783">
        <id>Q38897</id>
    </interactant>
    <interactant intactId="EBI-1153809">
        <id>P46640</id>
        <label>KNAT2</label>
    </interactant>
    <organismsDiffer>false</organismsDiffer>
    <experiments>3</experiments>
</comment>
<comment type="interaction">
    <interactant intactId="EBI-1153783">
        <id>Q38897</id>
    </interactant>
    <interactant intactId="EBI-1153908">
        <id>P48000</id>
        <label>KNAT3</label>
    </interactant>
    <organismsDiffer>false</organismsDiffer>
    <experiments>3</experiments>
</comment>
<comment type="interaction">
    <interactant intactId="EBI-1153783">
        <id>Q38897</id>
    </interactant>
    <interactant intactId="EBI-1153922">
        <id>P48002</id>
        <label>KNAT5</label>
    </interactant>
    <organismsDiffer>false</organismsDiffer>
    <experiments>3</experiments>
</comment>
<comment type="interaction">
    <interactant intactId="EBI-1153783">
        <id>Q38897</id>
    </interactant>
    <interactant intactId="EBI-963624">
        <id>Q9SLH3</id>
        <label>RGA</label>
    </interactant>
    <organismsDiffer>false</organismsDiffer>
    <experiments>3</experiments>
</comment>
<comment type="interaction">
    <interactant intactId="EBI-1153783">
        <id>Q38897</id>
    </interactant>
    <interactant intactId="EBI-963665">
        <id>Q8GXW1</id>
        <label>RGL2</label>
    </interactant>
    <organismsDiffer>false</organismsDiffer>
    <experiments>3</experiments>
</comment>
<comment type="interaction">
    <interactant intactId="EBI-1153783">
        <id>Q38897</id>
    </interactant>
    <interactant intactId="EBI-530523">
        <id>Q38874</id>
        <label>STM</label>
    </interactant>
    <organismsDiffer>false</organismsDiffer>
    <experiments>10</experiments>
</comment>
<comment type="subcellular location">
    <subcellularLocation>
        <location evidence="2 4 11">Nucleus</location>
    </subcellularLocation>
</comment>
<comment type="tissue specificity">
    <text evidence="11">Expressed in both floral and vegetative tissues.</text>
</comment>
<comment type="developmental stage">
    <text evidence="11">Early expression is detected in the inflorescence apex of developing flowers and also in the ovule primordium and the integuments.</text>
</comment>
<comment type="domain">
    <text>The SR/KY and BELL domains are responsive for the interaction between the TALE/BELL proteins and the TALE/KNOX proteins.</text>
</comment>
<comment type="similarity">
    <text evidence="12">Belongs to the TALE/BELL homeobox family.</text>
</comment>
<comment type="sequence caution" evidence="12">
    <conflict type="frameshift">
        <sequence resource="EMBL-CDS" id="AAK96704"/>
    </conflict>
</comment>
<accession>Q38897</accession>
<accession>Q93Y33</accession>
<accession>Q9FN59</accession>
<gene>
    <name type="primary">BEL1</name>
    <name type="synonym">BELL1</name>
    <name type="ordered locus">At5g41410</name>
    <name type="ORF">MYC6.12</name>
</gene>
<organism>
    <name type="scientific">Arabidopsis thaliana</name>
    <name type="common">Mouse-ear cress</name>
    <dbReference type="NCBI Taxonomy" id="3702"/>
    <lineage>
        <taxon>Eukaryota</taxon>
        <taxon>Viridiplantae</taxon>
        <taxon>Streptophyta</taxon>
        <taxon>Embryophyta</taxon>
        <taxon>Tracheophyta</taxon>
        <taxon>Spermatophyta</taxon>
        <taxon>Magnoliopsida</taxon>
        <taxon>eudicotyledons</taxon>
        <taxon>Gunneridae</taxon>
        <taxon>Pentapetalae</taxon>
        <taxon>rosids</taxon>
        <taxon>malvids</taxon>
        <taxon>Brassicales</taxon>
        <taxon>Brassicaceae</taxon>
        <taxon>Camelineae</taxon>
        <taxon>Arabidopsis</taxon>
    </lineage>
</organism>
<protein>
    <recommendedName>
        <fullName>Homeobox protein BEL1 homolog</fullName>
    </recommendedName>
</protein>
<sequence>MARDQFYGHNNHHHQEQQHQMINQIQGFDETNQNPTDHHHYNHQIFGSNSNMGMMIDFSKQQQIRMTSGSDHHHHHHQTSGGTDQNQLLEDSSSAMRLCNVNNDFPSEVNDERPPQRPSQGLSLSLSSSNPTSISLQSFELRPQQQQQQGYSGNKSTQHQNLQHTQMMMMMMNSHHQNNNNNNHQHHNHHQFQIGSSKYLSPAQELLSEFCSLGVKESDEEVMMMKHKKKQKGKQQEEWDTSHHSNNDQHDQSATTSSKKHVPPLHSLEFMELQKRKAKLLSMLEELKRRYGHYREQMRVAAAAFEAAVGLGGAEIYTALASRAMSRHFRCLKDGLVGQIQATSQALGEREEDNRAVSIAARGETPRLRLLDQALRQQKSYRQMTLVDAHPWRPQRGLPERAVTTLRAWLFEHFLHPYPSDVDKHILARQTGLSRSQVSNWFINARVRLWKPMIEEMYCEETRSEQMEITNPMMIDTKPDPDQLIRVEPESLSSIVTNPTSKSGHNSTHGTMSLGSTFDFSLYGNQAVTYAGEGGPRGDVSLTLGLQRNDGNGGVSLALSPVTAQGGQLFYGRDHIEEGPVQYSASMLDDDQVQNLPYRNLMGAQLLHDIV</sequence>
<keyword id="KW-0238">DNA-binding</keyword>
<keyword id="KW-0371">Homeobox</keyword>
<keyword id="KW-0539">Nucleus</keyword>
<keyword id="KW-1185">Reference proteome</keyword>
<keyword id="KW-0804">Transcription</keyword>
<keyword id="KW-0805">Transcription regulation</keyword>
<dbReference type="EMBL" id="U39944">
    <property type="protein sequence ID" value="AAB05099.2"/>
    <property type="molecule type" value="mRNA"/>
</dbReference>
<dbReference type="EMBL" id="AB006707">
    <property type="protein sequence ID" value="BAB08513.1"/>
    <property type="molecule type" value="Genomic_DNA"/>
</dbReference>
<dbReference type="EMBL" id="CP002688">
    <property type="protein sequence ID" value="AED94676.1"/>
    <property type="molecule type" value="Genomic_DNA"/>
</dbReference>
<dbReference type="EMBL" id="AY049237">
    <property type="protein sequence ID" value="AAK83580.1"/>
    <property type="molecule type" value="mRNA"/>
</dbReference>
<dbReference type="EMBL" id="AY054513">
    <property type="protein sequence ID" value="AAK96704.1"/>
    <property type="status" value="ALT_FRAME"/>
    <property type="molecule type" value="mRNA"/>
</dbReference>
<dbReference type="EMBL" id="BT002637">
    <property type="protein sequence ID" value="AAO11553.1"/>
    <property type="molecule type" value="mRNA"/>
</dbReference>
<dbReference type="PIR" id="A57632">
    <property type="entry name" value="A57632"/>
</dbReference>
<dbReference type="RefSeq" id="NP_198957.1">
    <property type="nucleotide sequence ID" value="NM_123506.3"/>
</dbReference>
<dbReference type="SMR" id="Q38897"/>
<dbReference type="BioGRID" id="19394">
    <property type="interactions" value="38"/>
</dbReference>
<dbReference type="FunCoup" id="Q38897">
    <property type="interactions" value="245"/>
</dbReference>
<dbReference type="IntAct" id="Q38897">
    <property type="interactions" value="42"/>
</dbReference>
<dbReference type="STRING" id="3702.Q38897"/>
<dbReference type="iPTMnet" id="Q38897"/>
<dbReference type="PaxDb" id="3702-AT5G41410.1"/>
<dbReference type="ProteomicsDB" id="240856"/>
<dbReference type="EnsemblPlants" id="AT5G41410.1">
    <property type="protein sequence ID" value="AT5G41410.1"/>
    <property type="gene ID" value="AT5G41410"/>
</dbReference>
<dbReference type="GeneID" id="834143"/>
<dbReference type="Gramene" id="AT5G41410.1">
    <property type="protein sequence ID" value="AT5G41410.1"/>
    <property type="gene ID" value="AT5G41410"/>
</dbReference>
<dbReference type="KEGG" id="ath:AT5G41410"/>
<dbReference type="Araport" id="AT5G41410"/>
<dbReference type="TAIR" id="AT5G41410">
    <property type="gene designation" value="BEL1"/>
</dbReference>
<dbReference type="eggNOG" id="KOG0773">
    <property type="taxonomic scope" value="Eukaryota"/>
</dbReference>
<dbReference type="HOGENOM" id="CLU_011058_5_1_1"/>
<dbReference type="InParanoid" id="Q38897"/>
<dbReference type="OMA" id="GHYREQM"/>
<dbReference type="PhylomeDB" id="Q38897"/>
<dbReference type="PRO" id="PR:Q38897"/>
<dbReference type="Proteomes" id="UP000006548">
    <property type="component" value="Chromosome 5"/>
</dbReference>
<dbReference type="ExpressionAtlas" id="Q38897">
    <property type="expression patterns" value="baseline and differential"/>
</dbReference>
<dbReference type="GO" id="GO:0005829">
    <property type="term" value="C:cytosol"/>
    <property type="evidence" value="ECO:0000314"/>
    <property type="project" value="TAIR"/>
</dbReference>
<dbReference type="GO" id="GO:0005634">
    <property type="term" value="C:nucleus"/>
    <property type="evidence" value="ECO:0000314"/>
    <property type="project" value="TAIR"/>
</dbReference>
<dbReference type="GO" id="GO:0009506">
    <property type="term" value="C:plasmodesma"/>
    <property type="evidence" value="ECO:0007005"/>
    <property type="project" value="TAIR"/>
</dbReference>
<dbReference type="GO" id="GO:0003677">
    <property type="term" value="F:DNA binding"/>
    <property type="evidence" value="ECO:0007669"/>
    <property type="project" value="UniProtKB-KW"/>
</dbReference>
<dbReference type="GO" id="GO:0003700">
    <property type="term" value="F:DNA-binding transcription factor activity"/>
    <property type="evidence" value="ECO:0000250"/>
    <property type="project" value="TAIR"/>
</dbReference>
<dbReference type="CDD" id="cd00086">
    <property type="entry name" value="homeodomain"/>
    <property type="match status" value="1"/>
</dbReference>
<dbReference type="FunFam" id="1.10.10.60:FF:000083">
    <property type="entry name" value="BEL1-like homeodomain protein 4"/>
    <property type="match status" value="1"/>
</dbReference>
<dbReference type="Gene3D" id="1.10.10.60">
    <property type="entry name" value="Homeodomain-like"/>
    <property type="match status" value="1"/>
</dbReference>
<dbReference type="InterPro" id="IPR001356">
    <property type="entry name" value="HD"/>
</dbReference>
<dbReference type="InterPro" id="IPR009057">
    <property type="entry name" value="Homeodomain-like_sf"/>
</dbReference>
<dbReference type="InterPro" id="IPR008422">
    <property type="entry name" value="KN_HD"/>
</dbReference>
<dbReference type="InterPro" id="IPR006563">
    <property type="entry name" value="POX_dom"/>
</dbReference>
<dbReference type="InterPro" id="IPR050224">
    <property type="entry name" value="TALE_homeobox"/>
</dbReference>
<dbReference type="PANTHER" id="PTHR11850">
    <property type="entry name" value="HOMEOBOX PROTEIN TRANSCRIPTION FACTORS"/>
    <property type="match status" value="1"/>
</dbReference>
<dbReference type="Pfam" id="PF05920">
    <property type="entry name" value="Homeobox_KN"/>
    <property type="match status" value="1"/>
</dbReference>
<dbReference type="Pfam" id="PF07526">
    <property type="entry name" value="POX"/>
    <property type="match status" value="1"/>
</dbReference>
<dbReference type="SMART" id="SM00389">
    <property type="entry name" value="HOX"/>
    <property type="match status" value="1"/>
</dbReference>
<dbReference type="SMART" id="SM00574">
    <property type="entry name" value="POX"/>
    <property type="match status" value="1"/>
</dbReference>
<dbReference type="SUPFAM" id="SSF46689">
    <property type="entry name" value="Homeodomain-like"/>
    <property type="match status" value="1"/>
</dbReference>
<dbReference type="PROSITE" id="PS00027">
    <property type="entry name" value="HOMEOBOX_1"/>
    <property type="match status" value="1"/>
</dbReference>
<dbReference type="PROSITE" id="PS50071">
    <property type="entry name" value="HOMEOBOX_2"/>
    <property type="match status" value="1"/>
</dbReference>
<evidence type="ECO:0000255" key="1"/>
<evidence type="ECO:0000255" key="2">
    <source>
        <dbReference type="PROSITE-ProRule" id="PRU00108"/>
    </source>
</evidence>
<evidence type="ECO:0000256" key="3">
    <source>
        <dbReference type="SAM" id="MobiDB-lite"/>
    </source>
</evidence>
<evidence type="ECO:0000269" key="4">
    <source>
    </source>
</evidence>
<evidence type="ECO:0000269" key="5">
    <source>
    </source>
</evidence>
<evidence type="ECO:0000269" key="6">
    <source>
    </source>
</evidence>
<evidence type="ECO:0000269" key="7">
    <source>
    </source>
</evidence>
<evidence type="ECO:0000269" key="8">
    <source>
    </source>
</evidence>
<evidence type="ECO:0000269" key="9">
    <source>
    </source>
</evidence>
<evidence type="ECO:0000269" key="10">
    <source>
    </source>
</evidence>
<evidence type="ECO:0000269" key="11">
    <source>
    </source>
</evidence>
<evidence type="ECO:0000305" key="12"/>
<proteinExistence type="evidence at protein level"/>
<feature type="chain" id="PRO_0000315456" description="Homeobox protein BEL1 homolog">
    <location>
        <begin position="1"/>
        <end position="611"/>
    </location>
</feature>
<feature type="DNA-binding region" description="Homeobox" evidence="2">
    <location>
        <begin position="391"/>
        <end position="453"/>
    </location>
</feature>
<feature type="region of interest" description="Disordered" evidence="3">
    <location>
        <begin position="63"/>
        <end position="87"/>
    </location>
</feature>
<feature type="region of interest" description="Disordered" evidence="3">
    <location>
        <begin position="101"/>
        <end position="133"/>
    </location>
</feature>
<feature type="region of interest" description="Disordered" evidence="3">
    <location>
        <begin position="141"/>
        <end position="160"/>
    </location>
</feature>
<feature type="region of interest" description="Disordered" evidence="3">
    <location>
        <begin position="174"/>
        <end position="195"/>
    </location>
</feature>
<feature type="region of interest" description="SR/KY domain">
    <location>
        <begin position="197"/>
        <end position="213"/>
    </location>
</feature>
<feature type="region of interest" description="Disordered" evidence="3">
    <location>
        <begin position="225"/>
        <end position="263"/>
    </location>
</feature>
<feature type="region of interest" description="BELL domain">
    <location>
        <begin position="269"/>
        <end position="340"/>
    </location>
</feature>
<feature type="short sequence motif" description="Bipartite nuclear localization" evidence="1">
    <location>
        <begin position="275"/>
        <end position="290"/>
    </location>
</feature>
<feature type="compositionally biased region" description="Low complexity" evidence="3">
    <location>
        <begin position="118"/>
        <end position="133"/>
    </location>
</feature>
<feature type="compositionally biased region" description="Low complexity" evidence="3">
    <location>
        <begin position="174"/>
        <end position="183"/>
    </location>
</feature>
<feature type="compositionally biased region" description="Basic and acidic residues" evidence="3">
    <location>
        <begin position="234"/>
        <end position="251"/>
    </location>
</feature>
<feature type="sequence conflict" description="In Ref. 4; AAK96704." evidence="12" ref="4">
    <original>R</original>
    <variation>G</variation>
    <location>
        <position position="113"/>
    </location>
</feature>
<reference key="1">
    <citation type="journal article" date="1995" name="Cell">
        <title>The BELL1 gene encodes a homeodomain protein involved in pattern formation in the Arabidopsis ovule primordium.</title>
        <authorList>
            <person name="Reiser L."/>
            <person name="Modrusan Z."/>
            <person name="Margossian L."/>
            <person name="Samach A."/>
            <person name="Ohad N."/>
            <person name="Haughn G.W."/>
            <person name="Fischer R.L."/>
        </authorList>
    </citation>
    <scope>NUCLEOTIDE SEQUENCE [MRNA]</scope>
    <scope>SUBCELLULAR LOCATION</scope>
    <scope>TISSUE SPECIFICITY</scope>
    <scope>DEVELOPMENTAL STAGE</scope>
</reference>
<reference key="2">
    <citation type="journal article" date="1997" name="DNA Res.">
        <title>Structural analysis of Arabidopsis thaliana chromosome 5. II. Sequence features of the regions of 1,044,062 bp covered by thirteen physically assigned P1 clones.</title>
        <authorList>
            <person name="Kotani H."/>
            <person name="Nakamura Y."/>
            <person name="Sato S."/>
            <person name="Kaneko T."/>
            <person name="Asamizu E."/>
            <person name="Miyajima N."/>
            <person name="Tabata S."/>
        </authorList>
    </citation>
    <scope>NUCLEOTIDE SEQUENCE [LARGE SCALE GENOMIC DNA]</scope>
    <source>
        <strain>cv. Columbia</strain>
    </source>
</reference>
<reference key="3">
    <citation type="journal article" date="2017" name="Plant J.">
        <title>Araport11: a complete reannotation of the Arabidopsis thaliana reference genome.</title>
        <authorList>
            <person name="Cheng C.Y."/>
            <person name="Krishnakumar V."/>
            <person name="Chan A.P."/>
            <person name="Thibaud-Nissen F."/>
            <person name="Schobel S."/>
            <person name="Town C.D."/>
        </authorList>
    </citation>
    <scope>GENOME REANNOTATION</scope>
    <source>
        <strain>cv. Columbia</strain>
    </source>
</reference>
<reference key="4">
    <citation type="journal article" date="2003" name="Science">
        <title>Empirical analysis of transcriptional activity in the Arabidopsis genome.</title>
        <authorList>
            <person name="Yamada K."/>
            <person name="Lim J."/>
            <person name="Dale J.M."/>
            <person name="Chen H."/>
            <person name="Shinn P."/>
            <person name="Palm C.J."/>
            <person name="Southwick A.M."/>
            <person name="Wu H.C."/>
            <person name="Kim C.J."/>
            <person name="Nguyen M."/>
            <person name="Pham P.K."/>
            <person name="Cheuk R.F."/>
            <person name="Karlin-Newmann G."/>
            <person name="Liu S.X."/>
            <person name="Lam B."/>
            <person name="Sakano H."/>
            <person name="Wu T."/>
            <person name="Yu G."/>
            <person name="Miranda M."/>
            <person name="Quach H.L."/>
            <person name="Tripp M."/>
            <person name="Chang C.H."/>
            <person name="Lee J.M."/>
            <person name="Toriumi M.J."/>
            <person name="Chan M.M."/>
            <person name="Tang C.C."/>
            <person name="Onodera C.S."/>
            <person name="Deng J.M."/>
            <person name="Akiyama K."/>
            <person name="Ansari Y."/>
            <person name="Arakawa T."/>
            <person name="Banh J."/>
            <person name="Banno F."/>
            <person name="Bowser L."/>
            <person name="Brooks S.Y."/>
            <person name="Carninci P."/>
            <person name="Chao Q."/>
            <person name="Choy N."/>
            <person name="Enju A."/>
            <person name="Goldsmith A.D."/>
            <person name="Gurjal M."/>
            <person name="Hansen N.F."/>
            <person name="Hayashizaki Y."/>
            <person name="Johnson-Hopson C."/>
            <person name="Hsuan V.W."/>
            <person name="Iida K."/>
            <person name="Karnes M."/>
            <person name="Khan S."/>
            <person name="Koesema E."/>
            <person name="Ishida J."/>
            <person name="Jiang P.X."/>
            <person name="Jones T."/>
            <person name="Kawai J."/>
            <person name="Kamiya A."/>
            <person name="Meyers C."/>
            <person name="Nakajima M."/>
            <person name="Narusaka M."/>
            <person name="Seki M."/>
            <person name="Sakurai T."/>
            <person name="Satou M."/>
            <person name="Tamse R."/>
            <person name="Vaysberg M."/>
            <person name="Wallender E.K."/>
            <person name="Wong C."/>
            <person name="Yamamura Y."/>
            <person name="Yuan S."/>
            <person name="Shinozaki K."/>
            <person name="Davis R.W."/>
            <person name="Theologis A."/>
            <person name="Ecker J.R."/>
        </authorList>
    </citation>
    <scope>NUCLEOTIDE SEQUENCE [LARGE SCALE MRNA]</scope>
    <source>
        <strain>cv. Columbia</strain>
    </source>
</reference>
<reference key="5">
    <citation type="journal article" date="1994" name="Plant Cell">
        <title>Homeotic transformation of ovules into carpel-like structures in Arabidopsis.</title>
        <authorList>
            <person name="Modrusan Z."/>
            <person name="Reiser L."/>
            <person name="Feldmann K.A."/>
            <person name="Fischer R.L."/>
            <person name="Haughn G.W."/>
        </authorList>
    </citation>
    <scope>FUNCTION</scope>
</reference>
<reference key="6">
    <citation type="journal article" date="2001" name="Plant Cell">
        <title>The Arabidopsis BELL1 and KNOX TALE homeodomain proteins interact through a domain conserved between plants and animals.</title>
        <authorList>
            <person name="Bellaoui M."/>
            <person name="Pidkowich M.S."/>
            <person name="Samach A."/>
            <person name="Kushalappa K."/>
            <person name="Kohalmi S.E."/>
            <person name="Modrusan Z."/>
            <person name="Crosby W.L."/>
            <person name="Haughn G.W."/>
        </authorList>
    </citation>
    <scope>HETERODIMERIZATION DOMAIN</scope>
    <scope>SUBCELLULAR LOCATION</scope>
</reference>
<reference key="7">
    <citation type="journal article" date="2004" name="Curr. Biol.">
        <title>Competence to respond to floral inductive signals requires the homeobox genes PENNYWISE and POUND-FOOLISH.</title>
        <authorList>
            <person name="Smith H.M.S."/>
            <person name="Campbell B.C.C."/>
            <person name="Hake S."/>
        </authorList>
    </citation>
    <scope>GENE FAMILY ORGANIZATION</scope>
</reference>
<reference key="8">
    <citation type="journal article" date="2007" name="Plant Cell">
        <title>Genetic and molecular interactions between BELL1 and MADS box factors support ovule development in Arabidopsis.</title>
        <authorList>
            <person name="Brambilla V."/>
            <person name="Battaglia R."/>
            <person name="Colombo M."/>
            <person name="Masiero S."/>
            <person name="Bencivenga S."/>
            <person name="Kater M.M."/>
            <person name="Colombo L."/>
        </authorList>
    </citation>
    <scope>FUNCTION</scope>
    <scope>INTERACTION WITH MADS-BOX FACTORS</scope>
</reference>
<reference key="9">
    <citation type="journal article" date="2007" name="Plant Cell">
        <title>The Arabidopsis BEL1-LIKE HOMEODOMAIN proteins SAW1 and SAW2 act redundantly to regulate KNOX expression spatially in leaf margins.</title>
        <authorList>
            <person name="Kumar R."/>
            <person name="Kushalappa K."/>
            <person name="Godt D."/>
            <person name="Pidkowich M.S."/>
            <person name="Pastorelli S."/>
            <person name="Hepworth S.R."/>
            <person name="Haughn G.W."/>
        </authorList>
    </citation>
    <scope>INTERACTION WITH TALE/KNOX PROTEINS</scope>
</reference>
<reference key="10">
    <citation type="journal article" date="2008" name="Plant Cell">
        <title>KNOX lost the OX: the Arabidopsis KNATM gene defines a novel class of KNOX transcriptional regulators missing the homeodomain.</title>
        <authorList>
            <person name="Magnani E."/>
            <person name="Hake S."/>
        </authorList>
    </citation>
    <scope>INTERACTION WITH KNATM</scope>
</reference>
<reference key="11">
    <citation type="journal article" date="2012" name="Plant Cell">
        <title>The transcription factors BEL1 and SPL are required for cytokinin and auxin signaling during ovule development in Arabidopsis.</title>
        <authorList>
            <person name="Bencivenga S."/>
            <person name="Simonini S."/>
            <person name="Benkova E."/>
            <person name="Colombo L."/>
        </authorList>
    </citation>
    <scope>FUNCTION</scope>
</reference>
<reference key="12">
    <citation type="journal article" date="2016" name="Plant J.">
        <title>Altered expression of the bZIP transcription factor DRINK ME affects growth and reproductive development in Arabidopsis thaliana.</title>
        <authorList>
            <person name="Lozano-Sotomayor P."/>
            <person name="Chavez Montes R.A."/>
            <person name="Silvestre-Vano M."/>
            <person name="Herrera-Ubaldo H."/>
            <person name="Greco R."/>
            <person name="Pablo-Villa J."/>
            <person name="Galliani B.M."/>
            <person name="Diaz-Ramirez D."/>
            <person name="Weemen M."/>
            <person name="Boutilier K."/>
            <person name="Pereira A."/>
            <person name="Colombo L."/>
            <person name="Madueno F."/>
            <person name="Marsch-Martinez N."/>
            <person name="de Folter S."/>
        </authorList>
    </citation>
    <scope>INTERACTION WITH BZIP30</scope>
</reference>